<accession>Q5E9P3</accession>
<sequence length="382" mass="42949">MGSTRIPLVKALHSPVSDYVNYDIIVRHYNYTGKLKISADKDNGIKLISVVFILICCFIILENIFVLLTIWKTKKFHRPMYYFIGNLALSDLLAGVAYTANLLLSGATTYKLTPAQWFLREGSMFVALSASVFSLLAIAIERYITMLKMKLHNGSNRFRSFLLISACWVISLILGGLPIMGWNCISTLPSCSTVLPLYHKHYILFCTTVFTLLLLSIVILYCRIYSLVRTRSRRLTFRKNISKASRSSEKSLALLKTVIIVLGVFIACWAPLFILLLLDVGCKVKTCDILFRTEYFLVLAVLNSGTNPIIYTLSNKEMRRAFVRIMSCCKCPSRDSASKFTRPIIAGMEFSRSKSDNSSHPQKDDGDNPETIMSSGNVNSSS</sequence>
<dbReference type="EMBL" id="BT020877">
    <property type="protein sequence ID" value="AAX08894.1"/>
    <property type="molecule type" value="mRNA"/>
</dbReference>
<dbReference type="EMBL" id="BC114045">
    <property type="protein sequence ID" value="AAI14046.1"/>
    <property type="molecule type" value="mRNA"/>
</dbReference>
<dbReference type="RefSeq" id="NP_001013603.2">
    <property type="nucleotide sequence ID" value="NM_001013585.4"/>
</dbReference>
<dbReference type="SMR" id="Q5E9P3"/>
<dbReference type="FunCoup" id="Q5E9P3">
    <property type="interactions" value="851"/>
</dbReference>
<dbReference type="STRING" id="9913.ENSBTAP00000007861"/>
<dbReference type="GlyCosmos" id="Q5E9P3">
    <property type="glycosylation" value="1 site, No reported glycans"/>
</dbReference>
<dbReference type="GlyGen" id="Q5E9P3">
    <property type="glycosylation" value="1 site"/>
</dbReference>
<dbReference type="PaxDb" id="9913-ENSBTAP00000007861"/>
<dbReference type="Ensembl" id="ENSBTAT00000007861.5">
    <property type="protein sequence ID" value="ENSBTAP00000007861.3"/>
    <property type="gene ID" value="ENSBTAG00000005990.5"/>
</dbReference>
<dbReference type="Ensembl" id="ENSBTAT00000096753.1">
    <property type="protein sequence ID" value="ENSBTAP00000082935.1"/>
    <property type="gene ID" value="ENSBTAG00000005990.5"/>
</dbReference>
<dbReference type="Ensembl" id="ENSBTAT00000133857.1">
    <property type="protein sequence ID" value="ENSBTAP00000093805.1"/>
    <property type="gene ID" value="ENSBTAG00000005990.5"/>
</dbReference>
<dbReference type="GeneID" id="281135"/>
<dbReference type="KEGG" id="bta:281135"/>
<dbReference type="CTD" id="1901"/>
<dbReference type="VEuPathDB" id="HostDB:ENSBTAG00000005990"/>
<dbReference type="VGNC" id="VGNC:34252">
    <property type="gene designation" value="S1PR1"/>
</dbReference>
<dbReference type="eggNOG" id="ENOG502QSFG">
    <property type="taxonomic scope" value="Eukaryota"/>
</dbReference>
<dbReference type="GeneTree" id="ENSGT01050000244887"/>
<dbReference type="HOGENOM" id="CLU_047979_1_0_1"/>
<dbReference type="InParanoid" id="Q5E9P3"/>
<dbReference type="OMA" id="LSCCKCP"/>
<dbReference type="OrthoDB" id="9945063at2759"/>
<dbReference type="TreeFam" id="TF330052"/>
<dbReference type="Reactome" id="R-BTA-419408">
    <property type="pathway name" value="Lysosphingolipid and LPA receptors"/>
</dbReference>
<dbReference type="Proteomes" id="UP000009136">
    <property type="component" value="Chromosome 3"/>
</dbReference>
<dbReference type="Bgee" id="ENSBTAG00000005990">
    <property type="expression patterns" value="Expressed in bone marrow and 101 other cell types or tissues"/>
</dbReference>
<dbReference type="GO" id="GO:0005737">
    <property type="term" value="C:cytoplasm"/>
    <property type="evidence" value="ECO:0000318"/>
    <property type="project" value="GO_Central"/>
</dbReference>
<dbReference type="GO" id="GO:0005768">
    <property type="term" value="C:endosome"/>
    <property type="evidence" value="ECO:0007669"/>
    <property type="project" value="UniProtKB-SubCell"/>
</dbReference>
<dbReference type="GO" id="GO:0009897">
    <property type="term" value="C:external side of plasma membrane"/>
    <property type="evidence" value="ECO:0007669"/>
    <property type="project" value="Ensembl"/>
</dbReference>
<dbReference type="GO" id="GO:0045121">
    <property type="term" value="C:membrane raft"/>
    <property type="evidence" value="ECO:0007669"/>
    <property type="project" value="UniProtKB-SubCell"/>
</dbReference>
<dbReference type="GO" id="GO:0005654">
    <property type="term" value="C:nucleoplasm"/>
    <property type="evidence" value="ECO:0007669"/>
    <property type="project" value="Ensembl"/>
</dbReference>
<dbReference type="GO" id="GO:0005886">
    <property type="term" value="C:plasma membrane"/>
    <property type="evidence" value="ECO:0000250"/>
    <property type="project" value="UniProtKB"/>
</dbReference>
<dbReference type="GO" id="GO:0098793">
    <property type="term" value="C:presynapse"/>
    <property type="evidence" value="ECO:0007669"/>
    <property type="project" value="Ensembl"/>
</dbReference>
<dbReference type="GO" id="GO:0001664">
    <property type="term" value="F:G protein-coupled receptor binding"/>
    <property type="evidence" value="ECO:0007669"/>
    <property type="project" value="Ensembl"/>
</dbReference>
<dbReference type="GO" id="GO:0038036">
    <property type="term" value="F:sphingosine-1-phosphate receptor activity"/>
    <property type="evidence" value="ECO:0000250"/>
    <property type="project" value="UniProtKB"/>
</dbReference>
<dbReference type="GO" id="GO:0030036">
    <property type="term" value="P:actin cytoskeleton organization"/>
    <property type="evidence" value="ECO:0000250"/>
    <property type="project" value="UniProtKB"/>
</dbReference>
<dbReference type="GO" id="GO:0007189">
    <property type="term" value="P:adenylate cyclase-activating G protein-coupled receptor signaling pathway"/>
    <property type="evidence" value="ECO:0000318"/>
    <property type="project" value="GO_Central"/>
</dbReference>
<dbReference type="GO" id="GO:0007193">
    <property type="term" value="P:adenylate cyclase-inhibiting G protein-coupled receptor signaling pathway"/>
    <property type="evidence" value="ECO:0007669"/>
    <property type="project" value="Ensembl"/>
</dbReference>
<dbReference type="GO" id="GO:0001525">
    <property type="term" value="P:angiogenesis"/>
    <property type="evidence" value="ECO:0000318"/>
    <property type="project" value="GO_Central"/>
</dbReference>
<dbReference type="GO" id="GO:0001955">
    <property type="term" value="P:blood vessel maturation"/>
    <property type="evidence" value="ECO:0000250"/>
    <property type="project" value="UniProtKB"/>
</dbReference>
<dbReference type="GO" id="GO:0007420">
    <property type="term" value="P:brain development"/>
    <property type="evidence" value="ECO:0007669"/>
    <property type="project" value="Ensembl"/>
</dbReference>
<dbReference type="GO" id="GO:0003245">
    <property type="term" value="P:cardiac muscle tissue growth involved in heart morphogenesis"/>
    <property type="evidence" value="ECO:0000250"/>
    <property type="project" value="UniProtKB"/>
</dbReference>
<dbReference type="GO" id="GO:0016477">
    <property type="term" value="P:cell migration"/>
    <property type="evidence" value="ECO:0000250"/>
    <property type="project" value="UniProtKB"/>
</dbReference>
<dbReference type="GO" id="GO:0008283">
    <property type="term" value="P:cell population proliferation"/>
    <property type="evidence" value="ECO:0007669"/>
    <property type="project" value="Ensembl"/>
</dbReference>
<dbReference type="GO" id="GO:0006935">
    <property type="term" value="P:chemotaxis"/>
    <property type="evidence" value="ECO:0000250"/>
    <property type="project" value="UniProtKB"/>
</dbReference>
<dbReference type="GO" id="GO:0061384">
    <property type="term" value="P:heart trabecula morphogenesis"/>
    <property type="evidence" value="ECO:0000250"/>
    <property type="project" value="UniProtKB"/>
</dbReference>
<dbReference type="GO" id="GO:0030032">
    <property type="term" value="P:lamellipodium assembly"/>
    <property type="evidence" value="ECO:0000250"/>
    <property type="project" value="UniProtKB"/>
</dbReference>
<dbReference type="GO" id="GO:0030595">
    <property type="term" value="P:leukocyte chemotaxis"/>
    <property type="evidence" value="ECO:0007669"/>
    <property type="project" value="Ensembl"/>
</dbReference>
<dbReference type="GO" id="GO:0008284">
    <property type="term" value="P:positive regulation of cell population proliferation"/>
    <property type="evidence" value="ECO:0007669"/>
    <property type="project" value="Ensembl"/>
</dbReference>
<dbReference type="GO" id="GO:0030500">
    <property type="term" value="P:regulation of bone mineralization"/>
    <property type="evidence" value="ECO:0000250"/>
    <property type="project" value="UniProtKB"/>
</dbReference>
<dbReference type="GO" id="GO:0045124">
    <property type="term" value="P:regulation of bone resorption"/>
    <property type="evidence" value="ECO:0000250"/>
    <property type="project" value="UniProtKB"/>
</dbReference>
<dbReference type="GO" id="GO:0030155">
    <property type="term" value="P:regulation of cell adhesion"/>
    <property type="evidence" value="ECO:0007669"/>
    <property type="project" value="Ensembl"/>
</dbReference>
<dbReference type="GO" id="GO:0019222">
    <property type="term" value="P:regulation of metabolic process"/>
    <property type="evidence" value="ECO:0000318"/>
    <property type="project" value="GO_Central"/>
</dbReference>
<dbReference type="GO" id="GO:0003376">
    <property type="term" value="P:sphingosine-1-phosphate receptor signaling pathway"/>
    <property type="evidence" value="ECO:0000250"/>
    <property type="project" value="UniProtKB"/>
</dbReference>
<dbReference type="GO" id="GO:0072678">
    <property type="term" value="P:T cell migration"/>
    <property type="evidence" value="ECO:0000250"/>
    <property type="project" value="UniProtKB"/>
</dbReference>
<dbReference type="CDD" id="cd15346">
    <property type="entry name" value="7tmA_S1PR1_Edg1"/>
    <property type="match status" value="1"/>
</dbReference>
<dbReference type="FunFam" id="1.20.1070.10:FF:000098">
    <property type="entry name" value="Sphingosine 1-phosphate receptor 1"/>
    <property type="match status" value="1"/>
</dbReference>
<dbReference type="Gene3D" id="1.20.1070.10">
    <property type="entry name" value="Rhodopsin 7-helix transmembrane proteins"/>
    <property type="match status" value="1"/>
</dbReference>
<dbReference type="InterPro" id="IPR000987">
    <property type="entry name" value="EDG1"/>
</dbReference>
<dbReference type="InterPro" id="IPR000276">
    <property type="entry name" value="GPCR_Rhodpsn"/>
</dbReference>
<dbReference type="InterPro" id="IPR017452">
    <property type="entry name" value="GPCR_Rhodpsn_7TM"/>
</dbReference>
<dbReference type="InterPro" id="IPR004061">
    <property type="entry name" value="S1P_rcpt"/>
</dbReference>
<dbReference type="PANTHER" id="PTHR22750">
    <property type="entry name" value="G-PROTEIN COUPLED RECEPTOR"/>
    <property type="match status" value="1"/>
</dbReference>
<dbReference type="Pfam" id="PF00001">
    <property type="entry name" value="7tm_1"/>
    <property type="match status" value="1"/>
</dbReference>
<dbReference type="PRINTS" id="PR00642">
    <property type="entry name" value="EDG1RECEPTOR"/>
</dbReference>
<dbReference type="PRINTS" id="PR00237">
    <property type="entry name" value="GPCRRHODOPSN"/>
</dbReference>
<dbReference type="PRINTS" id="PR01523">
    <property type="entry name" value="S1PRECEPTOR"/>
</dbReference>
<dbReference type="SMART" id="SM01381">
    <property type="entry name" value="7TM_GPCR_Srsx"/>
    <property type="match status" value="1"/>
</dbReference>
<dbReference type="SUPFAM" id="SSF81321">
    <property type="entry name" value="Family A G protein-coupled receptor-like"/>
    <property type="match status" value="1"/>
</dbReference>
<dbReference type="PROSITE" id="PS00237">
    <property type="entry name" value="G_PROTEIN_RECEP_F1_1"/>
    <property type="match status" value="1"/>
</dbReference>
<dbReference type="PROSITE" id="PS50262">
    <property type="entry name" value="G_PROTEIN_RECEP_F1_2"/>
    <property type="match status" value="1"/>
</dbReference>
<reference key="1">
    <citation type="journal article" date="2005" name="BMC Genomics">
        <title>Characterization of 954 bovine full-CDS cDNA sequences.</title>
        <authorList>
            <person name="Harhay G.P."/>
            <person name="Sonstegard T.S."/>
            <person name="Keele J.W."/>
            <person name="Heaton M.P."/>
            <person name="Clawson M.L."/>
            <person name="Snelling W.M."/>
            <person name="Wiedmann R.T."/>
            <person name="Van Tassell C.P."/>
            <person name="Smith T.P.L."/>
        </authorList>
    </citation>
    <scope>NUCLEOTIDE SEQUENCE [LARGE SCALE MRNA]</scope>
</reference>
<reference key="2">
    <citation type="submission" date="2006-02" db="EMBL/GenBank/DDBJ databases">
        <authorList>
            <consortium name="NIH - Mammalian Gene Collection (MGC) project"/>
        </authorList>
    </citation>
    <scope>NUCLEOTIDE SEQUENCE [LARGE SCALE MRNA]</scope>
    <source>
        <strain>Hereford</strain>
        <tissue>Hypothalamus</tissue>
    </source>
</reference>
<gene>
    <name type="primary">S1PR1</name>
    <name type="synonym">EDG1</name>
</gene>
<name>S1PR1_BOVIN</name>
<keyword id="KW-0007">Acetylation</keyword>
<keyword id="KW-0037">Angiogenesis</keyword>
<keyword id="KW-1003">Cell membrane</keyword>
<keyword id="KW-0145">Chemotaxis</keyword>
<keyword id="KW-1015">Disulfide bond</keyword>
<keyword id="KW-0967">Endosome</keyword>
<keyword id="KW-0297">G-protein coupled receptor</keyword>
<keyword id="KW-0325">Glycoprotein</keyword>
<keyword id="KW-0449">Lipoprotein</keyword>
<keyword id="KW-0472">Membrane</keyword>
<keyword id="KW-0564">Palmitate</keyword>
<keyword id="KW-0597">Phosphoprotein</keyword>
<keyword id="KW-0675">Receptor</keyword>
<keyword id="KW-1185">Reference proteome</keyword>
<keyword id="KW-0807">Transducer</keyword>
<keyword id="KW-0812">Transmembrane</keyword>
<keyword id="KW-1133">Transmembrane helix</keyword>
<organism>
    <name type="scientific">Bos taurus</name>
    <name type="common">Bovine</name>
    <dbReference type="NCBI Taxonomy" id="9913"/>
    <lineage>
        <taxon>Eukaryota</taxon>
        <taxon>Metazoa</taxon>
        <taxon>Chordata</taxon>
        <taxon>Craniata</taxon>
        <taxon>Vertebrata</taxon>
        <taxon>Euteleostomi</taxon>
        <taxon>Mammalia</taxon>
        <taxon>Eutheria</taxon>
        <taxon>Laurasiatheria</taxon>
        <taxon>Artiodactyla</taxon>
        <taxon>Ruminantia</taxon>
        <taxon>Pecora</taxon>
        <taxon>Bovidae</taxon>
        <taxon>Bovinae</taxon>
        <taxon>Bos</taxon>
    </lineage>
</organism>
<evidence type="ECO:0000250" key="1"/>
<evidence type="ECO:0000250" key="2">
    <source>
        <dbReference type="UniProtKB" id="O08530"/>
    </source>
</evidence>
<evidence type="ECO:0000250" key="3">
    <source>
        <dbReference type="UniProtKB" id="P21453"/>
    </source>
</evidence>
<evidence type="ECO:0000255" key="4"/>
<evidence type="ECO:0000255" key="5">
    <source>
        <dbReference type="PROSITE-ProRule" id="PRU00521"/>
    </source>
</evidence>
<evidence type="ECO:0000256" key="6">
    <source>
        <dbReference type="SAM" id="MobiDB-lite"/>
    </source>
</evidence>
<protein>
    <recommendedName>
        <fullName>Sphingosine 1-phosphate receptor 1</fullName>
        <shortName>S1P receptor 1</shortName>
        <shortName>S1P1</shortName>
    </recommendedName>
    <alternativeName>
        <fullName>Endothelial differentiation G-protein coupled receptor 1</fullName>
    </alternativeName>
    <alternativeName>
        <fullName>Sphingosine 1-phosphate receptor Edg-1</fullName>
        <shortName>S1P receptor Edg-1</shortName>
    </alternativeName>
    <cdAntigenName>CD363</cdAntigenName>
</protein>
<feature type="chain" id="PRO_0000244621" description="Sphingosine 1-phosphate receptor 1">
    <location>
        <begin position="1"/>
        <end position="382"/>
    </location>
</feature>
<feature type="topological domain" description="Extracellular" evidence="1">
    <location>
        <begin position="1"/>
        <end position="46"/>
    </location>
</feature>
<feature type="transmembrane region" description="Helical; Name=1" evidence="1">
    <location>
        <begin position="47"/>
        <end position="68"/>
    </location>
</feature>
<feature type="topological domain" description="Cytoplasmic" evidence="1">
    <location>
        <begin position="69"/>
        <end position="82"/>
    </location>
</feature>
<feature type="transmembrane region" description="Helical; Name=2" evidence="1">
    <location>
        <begin position="83"/>
        <end position="104"/>
    </location>
</feature>
<feature type="topological domain" description="Extracellular" evidence="1">
    <location>
        <begin position="105"/>
        <end position="116"/>
    </location>
</feature>
<feature type="transmembrane region" description="Helical; Name=3" evidence="1">
    <location>
        <begin position="117"/>
        <end position="138"/>
    </location>
</feature>
<feature type="topological domain" description="Cytoplasmic" evidence="1">
    <location>
        <begin position="139"/>
        <end position="160"/>
    </location>
</feature>
<feature type="transmembrane region" description="Helical; Name=4" evidence="1">
    <location>
        <begin position="161"/>
        <end position="182"/>
    </location>
</feature>
<feature type="topological domain" description="Extracellular" evidence="1">
    <location>
        <begin position="183"/>
        <end position="196"/>
    </location>
</feature>
<feature type="transmembrane region" description="Helical; Name=5" evidence="1">
    <location>
        <begin position="197"/>
        <end position="224"/>
    </location>
</feature>
<feature type="topological domain" description="Cytoplasmic" evidence="1">
    <location>
        <begin position="225"/>
        <end position="257"/>
    </location>
</feature>
<feature type="transmembrane region" description="Helical; Name=6" evidence="1">
    <location>
        <begin position="258"/>
        <end position="278"/>
    </location>
</feature>
<feature type="topological domain" description="Extracellular" evidence="1">
    <location>
        <begin position="279"/>
        <end position="289"/>
    </location>
</feature>
<feature type="transmembrane region" description="Helical; Name=7" evidence="1">
    <location>
        <begin position="290"/>
        <end position="310"/>
    </location>
</feature>
<feature type="topological domain" description="Cytoplasmic" evidence="1">
    <location>
        <begin position="311"/>
        <end position="382"/>
    </location>
</feature>
<feature type="region of interest" description="Disordered" evidence="6">
    <location>
        <begin position="349"/>
        <end position="382"/>
    </location>
</feature>
<feature type="compositionally biased region" description="Basic and acidic residues" evidence="6">
    <location>
        <begin position="351"/>
        <end position="366"/>
    </location>
</feature>
<feature type="compositionally biased region" description="Polar residues" evidence="6">
    <location>
        <begin position="371"/>
        <end position="382"/>
    </location>
</feature>
<feature type="binding site" evidence="1">
    <location>
        <begin position="120"/>
        <end position="121"/>
    </location>
    <ligand>
        <name>sphing-4-enine 1-phosphate</name>
        <dbReference type="ChEBI" id="CHEBI:60119"/>
    </ligand>
</feature>
<feature type="binding site" evidence="1">
    <location>
        <begin position="265"/>
        <end position="269"/>
    </location>
    <ligand>
        <name>sphing-4-enine 1-phosphate</name>
        <dbReference type="ChEBI" id="CHEBI:60119"/>
    </ligand>
</feature>
<feature type="modified residue" description="N6-acetyllysine" evidence="2">
    <location>
        <position position="10"/>
    </location>
</feature>
<feature type="modified residue" description="Phosphothreonine; by PKB/AKT1" evidence="3">
    <location>
        <position position="236"/>
    </location>
</feature>
<feature type="modified residue" description="Phosphoserine" evidence="2">
    <location>
        <position position="351"/>
    </location>
</feature>
<feature type="modified residue" description="Phosphoserine" evidence="4">
    <location>
        <position position="353"/>
    </location>
</feature>
<feature type="lipid moiety-binding region" description="S-palmitoyl cysteine" evidence="1">
    <location>
        <position position="328"/>
    </location>
</feature>
<feature type="glycosylation site" description="N-linked (GlcNAc...) asparagine" evidence="4">
    <location>
        <position position="30"/>
    </location>
</feature>
<feature type="disulfide bond" evidence="5">
    <location>
        <begin position="184"/>
        <end position="191"/>
    </location>
</feature>
<feature type="disulfide bond" evidence="5">
    <location>
        <begin position="282"/>
        <end position="287"/>
    </location>
</feature>
<comment type="function">
    <text evidence="1 3">G-protein coupled receptor for the bioactive lysosphingolipid sphingosine 1-phosphate (S1P) that seems to be coupled to the G(i) subclass of heteromeric G proteins. Signaling leads to the activation of RAC1, SRC, PTK2/FAK1 and MAP kinases. Plays an important role in cell migration, probably via its role in the reorganization of the actin cytoskeleton and the formation of lamellipodia in response to stimuli that increase the activity of the sphingosine kinase SPHK1. Required for normal chemotaxis toward sphingosine 1-phosphate. Required for normal embryonic heart development and normal cardiac morphogenesis. Plays an important role in the regulation of sprouting angiogenesis and vascular maturation. Inhibits sprouting angiogenesis to prevent excessive sprouting during blood vessel development. Required for normal egress of mature T-cells from the thymus into the blood stream and into peripheral lymphoid organs. Plays a role in the migration of osteoclast precursor cells, the regulation of bone mineralization and bone homeostasis (By similarity). Plays a role in responses to oxidized 1-palmitoyl-2-arachidonoyl-sn-glycero-3-phosphocholine by pulmonary endothelial cells and in the protection against ventilator-induced lung injury (By similarity).</text>
</comment>
<comment type="subunit">
    <text evidence="3">Interacts with GNAI1 and GNAI3. Interacts with CD69; this interaction promotes S1PR1 degradation.</text>
</comment>
<comment type="subcellular location">
    <subcellularLocation>
        <location evidence="3">Cell membrane</location>
        <topology evidence="3">Multi-pass membrane protein</topology>
    </subcellularLocation>
    <subcellularLocation>
        <location evidence="3">Endosome</location>
    </subcellularLocation>
    <subcellularLocation>
        <location evidence="3">Membrane raft</location>
    </subcellularLocation>
    <text evidence="3">Recruited to caveolin-enriched plasma membrane microdomains in response to oxidized 1-palmitoyl-2-arachidonoyl-sn-glycero-3-phosphocholine. Ligand binding leads to receptor internalization.</text>
</comment>
<comment type="PTM">
    <text evidence="1">S1P-induced endothelial cell migration requires the PKB/AKT1-mediated phosphorylation of the third intracellular loop at the Thr-236 residue.</text>
</comment>
<comment type="PTM">
    <text evidence="3">Palmitoylated by ZDHHC5. Palmitoylation is required for targeting to plasma membrane, enabling G(i) coupling.</text>
</comment>
<comment type="similarity">
    <text evidence="5">Belongs to the G-protein coupled receptor 1 family.</text>
</comment>
<proteinExistence type="evidence at transcript level"/>